<keyword id="KW-1185">Reference proteome</keyword>
<keyword id="KW-0687">Ribonucleoprotein</keyword>
<keyword id="KW-0689">Ribosomal protein</keyword>
<name>RL301_ARATH</name>
<organism>
    <name type="scientific">Arabidopsis thaliana</name>
    <name type="common">Mouse-ear cress</name>
    <dbReference type="NCBI Taxonomy" id="3702"/>
    <lineage>
        <taxon>Eukaryota</taxon>
        <taxon>Viridiplantae</taxon>
        <taxon>Streptophyta</taxon>
        <taxon>Embryophyta</taxon>
        <taxon>Tracheophyta</taxon>
        <taxon>Spermatophyta</taxon>
        <taxon>Magnoliopsida</taxon>
        <taxon>eudicotyledons</taxon>
        <taxon>Gunneridae</taxon>
        <taxon>Pentapetalae</taxon>
        <taxon>rosids</taxon>
        <taxon>malvids</taxon>
        <taxon>Brassicales</taxon>
        <taxon>Brassicaceae</taxon>
        <taxon>Camelineae</taxon>
        <taxon>Arabidopsis</taxon>
    </lineage>
</organism>
<protein>
    <recommendedName>
        <fullName evidence="1">Large ribosomal subunit protein eL30z</fullName>
    </recommendedName>
    <alternativeName>
        <fullName>Putative 60S ribosomal protein L30-1</fullName>
    </alternativeName>
</protein>
<comment type="similarity">
    <text evidence="2">Belongs to the eukaryotic ribosomal protein eL30 family.</text>
</comment>
<sequence>MVAAKKTKKSHEGINSRLALVMKSGKYTLGYKSVLKSLRSSKGKLILISSNCPPLRRSEIEYYAMLAKVGVHHYNRNNVDLGTACGKYFRVSCLSIVDPGDSDIIKSLPGDQ</sequence>
<proteinExistence type="inferred from homology"/>
<evidence type="ECO:0000303" key="1">
    <source>
    </source>
</evidence>
<evidence type="ECO:0000305" key="2"/>
<feature type="chain" id="PRO_0000244747" description="Large ribosomal subunit protein eL30z">
    <location>
        <begin position="1"/>
        <end position="112"/>
    </location>
</feature>
<reference key="1">
    <citation type="journal article" date="2000" name="Nature">
        <title>Sequence and analysis of chromosome 1 of the plant Arabidopsis thaliana.</title>
        <authorList>
            <person name="Theologis A."/>
            <person name="Ecker J.R."/>
            <person name="Palm C.J."/>
            <person name="Federspiel N.A."/>
            <person name="Kaul S."/>
            <person name="White O."/>
            <person name="Alonso J."/>
            <person name="Altafi H."/>
            <person name="Araujo R."/>
            <person name="Bowman C.L."/>
            <person name="Brooks S.Y."/>
            <person name="Buehler E."/>
            <person name="Chan A."/>
            <person name="Chao Q."/>
            <person name="Chen H."/>
            <person name="Cheuk R.F."/>
            <person name="Chin C.W."/>
            <person name="Chung M.K."/>
            <person name="Conn L."/>
            <person name="Conway A.B."/>
            <person name="Conway A.R."/>
            <person name="Creasy T.H."/>
            <person name="Dewar K."/>
            <person name="Dunn P."/>
            <person name="Etgu P."/>
            <person name="Feldblyum T.V."/>
            <person name="Feng J.-D."/>
            <person name="Fong B."/>
            <person name="Fujii C.Y."/>
            <person name="Gill J.E."/>
            <person name="Goldsmith A.D."/>
            <person name="Haas B."/>
            <person name="Hansen N.F."/>
            <person name="Hughes B."/>
            <person name="Huizar L."/>
            <person name="Hunter J.L."/>
            <person name="Jenkins J."/>
            <person name="Johnson-Hopson C."/>
            <person name="Khan S."/>
            <person name="Khaykin E."/>
            <person name="Kim C.J."/>
            <person name="Koo H.L."/>
            <person name="Kremenetskaia I."/>
            <person name="Kurtz D.B."/>
            <person name="Kwan A."/>
            <person name="Lam B."/>
            <person name="Langin-Hooper S."/>
            <person name="Lee A."/>
            <person name="Lee J.M."/>
            <person name="Lenz C.A."/>
            <person name="Li J.H."/>
            <person name="Li Y.-P."/>
            <person name="Lin X."/>
            <person name="Liu S.X."/>
            <person name="Liu Z.A."/>
            <person name="Luros J.S."/>
            <person name="Maiti R."/>
            <person name="Marziali A."/>
            <person name="Militscher J."/>
            <person name="Miranda M."/>
            <person name="Nguyen M."/>
            <person name="Nierman W.C."/>
            <person name="Osborne B.I."/>
            <person name="Pai G."/>
            <person name="Peterson J."/>
            <person name="Pham P.K."/>
            <person name="Rizzo M."/>
            <person name="Rooney T."/>
            <person name="Rowley D."/>
            <person name="Sakano H."/>
            <person name="Salzberg S.L."/>
            <person name="Schwartz J.R."/>
            <person name="Shinn P."/>
            <person name="Southwick A.M."/>
            <person name="Sun H."/>
            <person name="Tallon L.J."/>
            <person name="Tambunga G."/>
            <person name="Toriumi M.J."/>
            <person name="Town C.D."/>
            <person name="Utterback T."/>
            <person name="Van Aken S."/>
            <person name="Vaysberg M."/>
            <person name="Vysotskaia V.S."/>
            <person name="Walker M."/>
            <person name="Wu D."/>
            <person name="Yu G."/>
            <person name="Fraser C.M."/>
            <person name="Venter J.C."/>
            <person name="Davis R.W."/>
        </authorList>
    </citation>
    <scope>NUCLEOTIDE SEQUENCE [LARGE SCALE GENOMIC DNA]</scope>
    <source>
        <strain>cv. Columbia</strain>
    </source>
</reference>
<reference key="2">
    <citation type="journal article" date="2017" name="Plant J.">
        <title>Araport11: a complete reannotation of the Arabidopsis thaliana reference genome.</title>
        <authorList>
            <person name="Cheng C.Y."/>
            <person name="Krishnakumar V."/>
            <person name="Chan A.P."/>
            <person name="Thibaud-Nissen F."/>
            <person name="Schobel S."/>
            <person name="Town C.D."/>
        </authorList>
    </citation>
    <scope>GENOME REANNOTATION</scope>
    <source>
        <strain>cv. Columbia</strain>
    </source>
</reference>
<reference key="3">
    <citation type="journal article" date="2001" name="Plant Physiol.">
        <title>The organization of cytoplasmic ribosomal protein genes in the Arabidopsis genome.</title>
        <authorList>
            <person name="Barakat A."/>
            <person name="Szick-Miranda K."/>
            <person name="Chang I.-F."/>
            <person name="Guyot R."/>
            <person name="Blanc G."/>
            <person name="Cooke R."/>
            <person name="Delseny M."/>
            <person name="Bailey-Serres J."/>
        </authorList>
    </citation>
    <scope>GENE FAMILY ORGANIZATION</scope>
    <scope>NOMENCLATURE</scope>
</reference>
<reference key="4">
    <citation type="journal article" date="2023" name="Plant Cell">
        <title>An updated nomenclature for plant ribosomal protein genes.</title>
        <authorList>
            <person name="Scarpin M.R."/>
            <person name="Busche M."/>
            <person name="Martinez R.E."/>
            <person name="Harper L.C."/>
            <person name="Reiser L."/>
            <person name="Szakonyi D."/>
            <person name="Merchante C."/>
            <person name="Lan T."/>
            <person name="Xiong W."/>
            <person name="Mo B."/>
            <person name="Tang G."/>
            <person name="Chen X."/>
            <person name="Bailey-Serres J."/>
            <person name="Browning K.S."/>
            <person name="Brunkard J.O."/>
        </authorList>
    </citation>
    <scope>NOMENCLATURE</scope>
</reference>
<gene>
    <name type="primary">RPL30A</name>
    <name type="ordered locus">At1g36240</name>
    <name type="ORF">F15C21.6</name>
</gene>
<accession>Q9C8F7</accession>
<dbReference type="EMBL" id="AC025781">
    <property type="protein sequence ID" value="AAG51255.1"/>
    <property type="molecule type" value="Genomic_DNA"/>
</dbReference>
<dbReference type="EMBL" id="CP002684">
    <property type="protein sequence ID" value="AEE31854.1"/>
    <property type="molecule type" value="Genomic_DNA"/>
</dbReference>
<dbReference type="PIR" id="H86483">
    <property type="entry name" value="H86483"/>
</dbReference>
<dbReference type="RefSeq" id="NP_174853.1">
    <property type="nucleotide sequence ID" value="NM_103317.1"/>
</dbReference>
<dbReference type="SMR" id="Q9C8F7"/>
<dbReference type="BioGRID" id="25762">
    <property type="interactions" value="83"/>
</dbReference>
<dbReference type="FunCoup" id="Q9C8F7">
    <property type="interactions" value="3349"/>
</dbReference>
<dbReference type="IntAct" id="Q9C8F7">
    <property type="interactions" value="3"/>
</dbReference>
<dbReference type="STRING" id="3702.Q9C8F7"/>
<dbReference type="iPTMnet" id="Q9C8F7"/>
<dbReference type="PaxDb" id="3702-AT1G36240.1"/>
<dbReference type="EnsemblPlants" id="AT1G36240.1">
    <property type="protein sequence ID" value="AT1G36240.1"/>
    <property type="gene ID" value="AT1G36240"/>
</dbReference>
<dbReference type="GeneID" id="840530"/>
<dbReference type="Gramene" id="AT1G36240.1">
    <property type="protein sequence ID" value="AT1G36240.1"/>
    <property type="gene ID" value="AT1G36240"/>
</dbReference>
<dbReference type="KEGG" id="ath:AT1G36240"/>
<dbReference type="Araport" id="AT1G36240"/>
<dbReference type="TAIR" id="AT1G36240"/>
<dbReference type="eggNOG" id="KOG2988">
    <property type="taxonomic scope" value="Eukaryota"/>
</dbReference>
<dbReference type="HOGENOM" id="CLU_130502_0_1_1"/>
<dbReference type="InParanoid" id="Q9C8F7"/>
<dbReference type="OMA" id="HRVSCLS"/>
<dbReference type="PhylomeDB" id="Q9C8F7"/>
<dbReference type="CD-CODE" id="4299E36E">
    <property type="entry name" value="Nucleolus"/>
</dbReference>
<dbReference type="PRO" id="PR:Q9C8F7"/>
<dbReference type="Proteomes" id="UP000006548">
    <property type="component" value="Chromosome 1"/>
</dbReference>
<dbReference type="ExpressionAtlas" id="Q9C8F7">
    <property type="expression patterns" value="baseline and differential"/>
</dbReference>
<dbReference type="GO" id="GO:0022625">
    <property type="term" value="C:cytosolic large ribosomal subunit"/>
    <property type="evidence" value="ECO:0007005"/>
    <property type="project" value="TAIR"/>
</dbReference>
<dbReference type="GO" id="GO:0005634">
    <property type="term" value="C:nucleus"/>
    <property type="evidence" value="ECO:0007005"/>
    <property type="project" value="TAIR"/>
</dbReference>
<dbReference type="GO" id="GO:0003729">
    <property type="term" value="F:mRNA binding"/>
    <property type="evidence" value="ECO:0000314"/>
    <property type="project" value="TAIR"/>
</dbReference>
<dbReference type="GO" id="GO:0003735">
    <property type="term" value="F:structural constituent of ribosome"/>
    <property type="evidence" value="ECO:0000314"/>
    <property type="project" value="CAFA"/>
</dbReference>
<dbReference type="FunFam" id="3.30.1330.30:FF:000001">
    <property type="entry name" value="60S ribosomal protein L30"/>
    <property type="match status" value="1"/>
</dbReference>
<dbReference type="Gene3D" id="3.30.1330.30">
    <property type="match status" value="1"/>
</dbReference>
<dbReference type="InterPro" id="IPR039109">
    <property type="entry name" value="Ribosomal_eL30-like"/>
</dbReference>
<dbReference type="InterPro" id="IPR029064">
    <property type="entry name" value="Ribosomal_eL30-like_sf"/>
</dbReference>
<dbReference type="InterPro" id="IPR022991">
    <property type="entry name" value="Ribosomal_eL30_CS"/>
</dbReference>
<dbReference type="InterPro" id="IPR004038">
    <property type="entry name" value="Ribosomal_eL8/eL30/eS12/Gad45"/>
</dbReference>
<dbReference type="NCBIfam" id="NF002172">
    <property type="entry name" value="PRK01018.1"/>
    <property type="match status" value="1"/>
</dbReference>
<dbReference type="PANTHER" id="PTHR11449">
    <property type="entry name" value="RIBOSOMAL PROTEIN L30"/>
    <property type="match status" value="1"/>
</dbReference>
<dbReference type="Pfam" id="PF01248">
    <property type="entry name" value="Ribosomal_L7Ae"/>
    <property type="match status" value="1"/>
</dbReference>
<dbReference type="SUPFAM" id="SSF55315">
    <property type="entry name" value="L30e-like"/>
    <property type="match status" value="1"/>
</dbReference>
<dbReference type="PROSITE" id="PS00709">
    <property type="entry name" value="RIBOSOMAL_L30E_1"/>
    <property type="match status" value="1"/>
</dbReference>
<dbReference type="PROSITE" id="PS00993">
    <property type="entry name" value="RIBOSOMAL_L30E_2"/>
    <property type="match status" value="1"/>
</dbReference>